<proteinExistence type="evidence at protein level"/>
<reference key="1">
    <citation type="submission" date="2006-04" db="EMBL/GenBank/DDBJ databases">
        <authorList>
            <consortium name="NIH - Mammalian Gene Collection (MGC) project"/>
        </authorList>
    </citation>
    <scope>NUCLEOTIDE SEQUENCE [LARGE SCALE MRNA]</scope>
    <source>
        <strain>Hereford</strain>
        <tissue>Uterus</tissue>
    </source>
</reference>
<reference key="2">
    <citation type="journal article" date="2016" name="J. Biol. Chem.">
        <title>Transmembrane protein 184A is a receptor required for vascular smooth muscle cell responses to heparin.</title>
        <authorList>
            <person name="Pugh R.J."/>
            <person name="Slee J.B."/>
            <person name="Farwell S.L."/>
            <person name="Li Y."/>
            <person name="Barthol T."/>
            <person name="Patton W.A."/>
            <person name="Lowe-Krentz L.J."/>
        </authorList>
    </citation>
    <scope>IDENTIFICATION BY MASS SPECTROMETRY</scope>
    <scope>SUBCELLULAR LOCATION</scope>
    <scope>TISSUE SPECIFICITY</scope>
</reference>
<feature type="chain" id="PRO_0000300467" description="Transmembrane protein 184A">
    <location>
        <begin position="1"/>
        <end position="414"/>
    </location>
</feature>
<feature type="transmembrane region" description="Helical" evidence="3">
    <location>
        <begin position="48"/>
        <end position="68"/>
    </location>
</feature>
<feature type="transmembrane region" description="Helical" evidence="3">
    <location>
        <begin position="83"/>
        <end position="103"/>
    </location>
</feature>
<feature type="transmembrane region" description="Helical" evidence="3">
    <location>
        <begin position="120"/>
        <end position="140"/>
    </location>
</feature>
<feature type="transmembrane region" description="Helical" evidence="3">
    <location>
        <begin position="177"/>
        <end position="197"/>
    </location>
</feature>
<feature type="transmembrane region" description="Helical" evidence="3">
    <location>
        <begin position="211"/>
        <end position="231"/>
    </location>
</feature>
<feature type="transmembrane region" description="Helical" evidence="3">
    <location>
        <begin position="248"/>
        <end position="268"/>
    </location>
</feature>
<feature type="transmembrane region" description="Helical" evidence="3">
    <location>
        <begin position="290"/>
        <end position="310"/>
    </location>
</feature>
<feature type="region of interest" description="Disordered" evidence="4">
    <location>
        <begin position="1"/>
        <end position="32"/>
    </location>
</feature>
<feature type="region of interest" description="Disordered" evidence="4">
    <location>
        <begin position="323"/>
        <end position="342"/>
    </location>
</feature>
<feature type="region of interest" description="Disordered" evidence="4">
    <location>
        <begin position="364"/>
        <end position="414"/>
    </location>
</feature>
<feature type="compositionally biased region" description="Polar residues" evidence="4">
    <location>
        <begin position="379"/>
        <end position="388"/>
    </location>
</feature>
<sequence>MTDTPGLLGTPLAWTPPARPAGPQMERAGNGSQGPGPLFLTSPLARGVSGVFVWAALVLTGHQIYLHLRSYTVPHEQRYIIRLLFIVPVYAFDSWLSLLLLGGHQHYIYFDSVRDCYEAFVIYSFLSLCFQYLGGESAIMAEIRGKPVRTSCFHGTCCLRGMTYSIGFLRFCKQATLQFCIVKPIMALVTIVLQAFGKYHDGDFNVRSGYLYITLVYNASVSLALYALFLFYSATRELLQPFEPVLKFLTIKAVIFLSFWQGLLLAILERCGVIPEVQVIDGSTVGAGTVAAGYQNFIICIEMLFASIALRYAFTCQVYSEKTESSPAPSAPMQSISSGLKETMSPQDIVQDAIHNFSPAYQKYTQQATQEAPRPGQGSVPSPRTPTHSPDGGPGGGRKGRNVEKRMLIPAEEL</sequence>
<evidence type="ECO:0000250" key="1">
    <source>
        <dbReference type="UniProtKB" id="Q3UFJ6"/>
    </source>
</evidence>
<evidence type="ECO:0000250" key="2">
    <source>
        <dbReference type="UniProtKB" id="Q4QQS1"/>
    </source>
</evidence>
<evidence type="ECO:0000255" key="3"/>
<evidence type="ECO:0000256" key="4">
    <source>
        <dbReference type="SAM" id="MobiDB-lite"/>
    </source>
</evidence>
<evidence type="ECO:0000269" key="5">
    <source>
    </source>
</evidence>
<evidence type="ECO:0000305" key="6"/>
<protein>
    <recommendedName>
        <fullName>Transmembrane protein 184A</fullName>
    </recommendedName>
</protein>
<name>T184A_BOVIN</name>
<organism>
    <name type="scientific">Bos taurus</name>
    <name type="common">Bovine</name>
    <dbReference type="NCBI Taxonomy" id="9913"/>
    <lineage>
        <taxon>Eukaryota</taxon>
        <taxon>Metazoa</taxon>
        <taxon>Chordata</taxon>
        <taxon>Craniata</taxon>
        <taxon>Vertebrata</taxon>
        <taxon>Euteleostomi</taxon>
        <taxon>Mammalia</taxon>
        <taxon>Eutheria</taxon>
        <taxon>Laurasiatheria</taxon>
        <taxon>Artiodactyla</taxon>
        <taxon>Ruminantia</taxon>
        <taxon>Pecora</taxon>
        <taxon>Bovidae</taxon>
        <taxon>Bovinae</taxon>
        <taxon>Bos</taxon>
    </lineage>
</organism>
<keyword id="KW-1003">Cell membrane</keyword>
<keyword id="KW-0963">Cytoplasm</keyword>
<keyword id="KW-0968">Cytoplasmic vesicle</keyword>
<keyword id="KW-0967">Endosome</keyword>
<keyword id="KW-0472">Membrane</keyword>
<keyword id="KW-1185">Reference proteome</keyword>
<keyword id="KW-0812">Transmembrane</keyword>
<keyword id="KW-1133">Transmembrane helix</keyword>
<dbReference type="EMBL" id="BC114674">
    <property type="protein sequence ID" value="AAI14675.1"/>
    <property type="molecule type" value="mRNA"/>
</dbReference>
<dbReference type="RefSeq" id="NP_001039737.1">
    <property type="nucleotide sequence ID" value="NM_001046272.1"/>
</dbReference>
<dbReference type="RefSeq" id="XP_010817863.1">
    <property type="nucleotide sequence ID" value="XM_010819561.2"/>
</dbReference>
<dbReference type="RefSeq" id="XP_024840685.1">
    <property type="nucleotide sequence ID" value="XM_024984917.2"/>
</dbReference>
<dbReference type="FunCoup" id="Q1RMW2">
    <property type="interactions" value="1148"/>
</dbReference>
<dbReference type="STRING" id="9913.ENSBTAP00000006135"/>
<dbReference type="PaxDb" id="9913-ENSBTAP00000006135"/>
<dbReference type="GeneID" id="524484"/>
<dbReference type="KEGG" id="bta:524484"/>
<dbReference type="CTD" id="202915"/>
<dbReference type="VEuPathDB" id="HostDB:ENSBTAG00000004676"/>
<dbReference type="eggNOG" id="KOG2641">
    <property type="taxonomic scope" value="Eukaryota"/>
</dbReference>
<dbReference type="HOGENOM" id="CLU_012923_3_0_1"/>
<dbReference type="InParanoid" id="Q1RMW2"/>
<dbReference type="OMA" id="CEQRYII"/>
<dbReference type="OrthoDB" id="5348404at2759"/>
<dbReference type="TreeFam" id="TF314160"/>
<dbReference type="Proteomes" id="UP000009136">
    <property type="component" value="Chromosome 25"/>
</dbReference>
<dbReference type="Bgee" id="ENSBTAG00000004676">
    <property type="expression patterns" value="Expressed in surface of tongue and 85 other cell types or tissues"/>
</dbReference>
<dbReference type="GO" id="GO:0030659">
    <property type="term" value="C:cytoplasmic vesicle membrane"/>
    <property type="evidence" value="ECO:0000314"/>
    <property type="project" value="UniProtKB"/>
</dbReference>
<dbReference type="GO" id="GO:0031901">
    <property type="term" value="C:early endosome membrane"/>
    <property type="evidence" value="ECO:0000250"/>
    <property type="project" value="UniProtKB"/>
</dbReference>
<dbReference type="GO" id="GO:0005768">
    <property type="term" value="C:endosome"/>
    <property type="evidence" value="ECO:0000250"/>
    <property type="project" value="UniProtKB"/>
</dbReference>
<dbReference type="GO" id="GO:0048471">
    <property type="term" value="C:perinuclear region of cytoplasm"/>
    <property type="evidence" value="ECO:0000314"/>
    <property type="project" value="UniProtKB"/>
</dbReference>
<dbReference type="GO" id="GO:0005886">
    <property type="term" value="C:plasma membrane"/>
    <property type="evidence" value="ECO:0000314"/>
    <property type="project" value="UniProtKB"/>
</dbReference>
<dbReference type="GO" id="GO:0030667">
    <property type="term" value="C:secretory granule membrane"/>
    <property type="evidence" value="ECO:0000250"/>
    <property type="project" value="UniProtKB"/>
</dbReference>
<dbReference type="GO" id="GO:0030658">
    <property type="term" value="C:transport vesicle membrane"/>
    <property type="evidence" value="ECO:0007669"/>
    <property type="project" value="UniProtKB-SubCell"/>
</dbReference>
<dbReference type="GO" id="GO:0008201">
    <property type="term" value="F:heparin binding"/>
    <property type="evidence" value="ECO:0000314"/>
    <property type="project" value="UniProtKB"/>
</dbReference>
<dbReference type="GO" id="GO:0022857">
    <property type="term" value="F:transmembrane transporter activity"/>
    <property type="evidence" value="ECO:0000318"/>
    <property type="project" value="GO_Central"/>
</dbReference>
<dbReference type="InterPro" id="IPR005178">
    <property type="entry name" value="Ostalpha/TMEM184C"/>
</dbReference>
<dbReference type="PANTHER" id="PTHR23423">
    <property type="entry name" value="ORGANIC SOLUTE TRANSPORTER-RELATED"/>
    <property type="match status" value="1"/>
</dbReference>
<dbReference type="Pfam" id="PF03619">
    <property type="entry name" value="Solute_trans_a"/>
    <property type="match status" value="1"/>
</dbReference>
<dbReference type="SMART" id="SM01417">
    <property type="entry name" value="Solute_trans_a"/>
    <property type="match status" value="1"/>
</dbReference>
<gene>
    <name type="primary">TMEM184A</name>
</gene>
<accession>Q1RMW2</accession>
<comment type="function">
    <text evidence="1 2">Acts as a heparin receptor in vascular cells (By similarity). May be involved in vesicle transport in exocrine cells and Sertoli cells (By similarity).</text>
</comment>
<comment type="subcellular location">
    <subcellularLocation>
        <location evidence="5">Cell membrane</location>
        <topology evidence="3">Multi-pass membrane protein</topology>
    </subcellularLocation>
    <subcellularLocation>
        <location evidence="5">Cytoplasm</location>
        <location evidence="5">Perinuclear region</location>
    </subcellularLocation>
    <subcellularLocation>
        <location evidence="5">Cytoplasmic vesicle membrane</location>
        <topology evidence="3">Multi-pass membrane protein</topology>
    </subcellularLocation>
    <subcellularLocation>
        <location evidence="1">Early endosome membrane</location>
        <topology evidence="3">Multi-pass membrane protein</topology>
    </subcellularLocation>
    <subcellularLocation>
        <location evidence="1">Endosome</location>
    </subcellularLocation>
    <subcellularLocation>
        <location evidence="1">Cytoplasmic vesicle</location>
        <location evidence="1">Secretory vesicle membrane</location>
    </subcellularLocation>
    <text evidence="5">Colocalizes with CAV1.</text>
</comment>
<comment type="tissue specificity">
    <text evidence="5">Expressed in vascular cells (at protein level).</text>
</comment>
<comment type="similarity">
    <text evidence="6">Belongs to the TMEM184 family.</text>
</comment>